<feature type="chain" id="PRO_0000322052" description="Photosystem II reaction center protein J">
    <location>
        <begin position="1"/>
        <end position="40"/>
    </location>
</feature>
<feature type="transmembrane region" description="Helical" evidence="1">
    <location>
        <begin position="8"/>
        <end position="28"/>
    </location>
</feature>
<accession>A6MMD6</accession>
<protein>
    <recommendedName>
        <fullName evidence="1">Photosystem II reaction center protein J</fullName>
        <shortName evidence="1">PSII-J</shortName>
    </recommendedName>
</protein>
<keyword id="KW-0150">Chloroplast</keyword>
<keyword id="KW-0472">Membrane</keyword>
<keyword id="KW-0602">Photosynthesis</keyword>
<keyword id="KW-0604">Photosystem II</keyword>
<keyword id="KW-0934">Plastid</keyword>
<keyword id="KW-0674">Reaction center</keyword>
<keyword id="KW-0793">Thylakoid</keyword>
<keyword id="KW-0812">Transmembrane</keyword>
<keyword id="KW-1133">Transmembrane helix</keyword>
<comment type="function">
    <text evidence="1">One of the components of the core complex of photosystem II (PSII). PSII is a light-driven water:plastoquinone oxidoreductase that uses light energy to abstract electrons from H(2)O, generating O(2) and a proton gradient subsequently used for ATP formation. It consists of a core antenna complex that captures photons, and an electron transfer chain that converts photonic excitation into a charge separation.</text>
</comment>
<comment type="subunit">
    <text evidence="1">PSII is composed of 1 copy each of membrane proteins PsbA, PsbB, PsbC, PsbD, PsbE, PsbF, PsbH, PsbI, PsbJ, PsbK, PsbL, PsbM, PsbT, PsbX, PsbY, PsbZ, Psb30/Ycf12, at least 3 peripheral proteins of the oxygen-evolving complex and a large number of cofactors. It forms dimeric complexes.</text>
</comment>
<comment type="subcellular location">
    <subcellularLocation>
        <location evidence="1">Plastid</location>
        <location evidence="1">Chloroplast thylakoid membrane</location>
        <topology evidence="1">Single-pass membrane protein</topology>
    </subcellularLocation>
</comment>
<comment type="similarity">
    <text evidence="1">Belongs to the PsbJ family.</text>
</comment>
<organism>
    <name type="scientific">Chloranthus spicatus</name>
    <name type="common">Chulantree</name>
    <name type="synonym">Nigrina spicata</name>
    <dbReference type="NCBI Taxonomy" id="13006"/>
    <lineage>
        <taxon>Eukaryota</taxon>
        <taxon>Viridiplantae</taxon>
        <taxon>Streptophyta</taxon>
        <taxon>Embryophyta</taxon>
        <taxon>Tracheophyta</taxon>
        <taxon>Spermatophyta</taxon>
        <taxon>Magnoliopsida</taxon>
        <taxon>Chloranthales</taxon>
        <taxon>Chloranthaceae</taxon>
        <taxon>Chloranthus</taxon>
    </lineage>
</organism>
<gene>
    <name evidence="1" type="primary">psbJ</name>
</gene>
<sequence length="40" mass="4119">MADTTGRIPLWLIGTVTGIPVIGSIGIFFYGSYSGLGSSL</sequence>
<name>PSBJ_CHLSC</name>
<evidence type="ECO:0000255" key="1">
    <source>
        <dbReference type="HAMAP-Rule" id="MF_01305"/>
    </source>
</evidence>
<proteinExistence type="inferred from homology"/>
<reference key="1">
    <citation type="journal article" date="2007" name="Mol. Phylogenet. Evol.">
        <title>Phylogenetic and evolutionary implications of complete chloroplast genome sequences of four early-diverging angiosperms: Buxus (Buxaceae), Chloranthus (Chloranthaceae), Dioscorea (Dioscoreaceae), and Illicium (Schisandraceae).</title>
        <authorList>
            <person name="Hansen D.R."/>
            <person name="Dastidar S.G."/>
            <person name="Cai Z."/>
            <person name="Penaflor C."/>
            <person name="Kuehl J.V."/>
            <person name="Boore J.L."/>
            <person name="Jansen R.K."/>
        </authorList>
    </citation>
    <scope>NUCLEOTIDE SEQUENCE [LARGE SCALE GENOMIC DNA]</scope>
</reference>
<dbReference type="EMBL" id="EF380352">
    <property type="protein sequence ID" value="ABQ43274.1"/>
    <property type="molecule type" value="Genomic_DNA"/>
</dbReference>
<dbReference type="RefSeq" id="YP_001294112.1">
    <property type="nucleotide sequence ID" value="NC_009598.1"/>
</dbReference>
<dbReference type="SMR" id="A6MMD6"/>
<dbReference type="GeneID" id="5236536"/>
<dbReference type="GO" id="GO:0009535">
    <property type="term" value="C:chloroplast thylakoid membrane"/>
    <property type="evidence" value="ECO:0007669"/>
    <property type="project" value="UniProtKB-SubCell"/>
</dbReference>
<dbReference type="GO" id="GO:0009539">
    <property type="term" value="C:photosystem II reaction center"/>
    <property type="evidence" value="ECO:0007669"/>
    <property type="project" value="InterPro"/>
</dbReference>
<dbReference type="GO" id="GO:0015979">
    <property type="term" value="P:photosynthesis"/>
    <property type="evidence" value="ECO:0007669"/>
    <property type="project" value="UniProtKB-UniRule"/>
</dbReference>
<dbReference type="Gene3D" id="6.10.250.2070">
    <property type="match status" value="1"/>
</dbReference>
<dbReference type="HAMAP" id="MF_01305">
    <property type="entry name" value="PSII_PsbJ"/>
    <property type="match status" value="1"/>
</dbReference>
<dbReference type="InterPro" id="IPR002682">
    <property type="entry name" value="PSII_PsbJ"/>
</dbReference>
<dbReference type="InterPro" id="IPR037267">
    <property type="entry name" value="PSII_PsbJ_sf"/>
</dbReference>
<dbReference type="NCBIfam" id="NF002722">
    <property type="entry name" value="PRK02565.1"/>
    <property type="match status" value="1"/>
</dbReference>
<dbReference type="PANTHER" id="PTHR34812">
    <property type="entry name" value="PHOTOSYSTEM II REACTION CENTER PROTEIN J"/>
    <property type="match status" value="1"/>
</dbReference>
<dbReference type="PANTHER" id="PTHR34812:SF3">
    <property type="entry name" value="PHOTOSYSTEM II REACTION CENTER PROTEIN J"/>
    <property type="match status" value="1"/>
</dbReference>
<dbReference type="Pfam" id="PF01788">
    <property type="entry name" value="PsbJ"/>
    <property type="match status" value="1"/>
</dbReference>
<dbReference type="SUPFAM" id="SSF161021">
    <property type="entry name" value="Photosystem II reaction center protein J, PsbJ"/>
    <property type="match status" value="1"/>
</dbReference>
<geneLocation type="chloroplast"/>